<organism>
    <name type="scientific">Pseudomonas syringae pv. syringae (strain B728a)</name>
    <dbReference type="NCBI Taxonomy" id="205918"/>
    <lineage>
        <taxon>Bacteria</taxon>
        <taxon>Pseudomonadati</taxon>
        <taxon>Pseudomonadota</taxon>
        <taxon>Gammaproteobacteria</taxon>
        <taxon>Pseudomonadales</taxon>
        <taxon>Pseudomonadaceae</taxon>
        <taxon>Pseudomonas</taxon>
        <taxon>Pseudomonas syringae</taxon>
    </lineage>
</organism>
<dbReference type="EC" id="3.1.1.96" evidence="1"/>
<dbReference type="EMBL" id="CP000075">
    <property type="protein sequence ID" value="AAY35446.1"/>
    <property type="molecule type" value="Genomic_DNA"/>
</dbReference>
<dbReference type="RefSeq" id="WP_011266358.1">
    <property type="nucleotide sequence ID" value="NC_007005.1"/>
</dbReference>
<dbReference type="RefSeq" id="YP_233484.1">
    <property type="nucleotide sequence ID" value="NC_007005.1"/>
</dbReference>
<dbReference type="SMR" id="Q4ZZH6"/>
<dbReference type="STRING" id="205918.Psyr_0376"/>
<dbReference type="KEGG" id="psb:Psyr_0376"/>
<dbReference type="PATRIC" id="fig|205918.7.peg.383"/>
<dbReference type="eggNOG" id="COG1490">
    <property type="taxonomic scope" value="Bacteria"/>
</dbReference>
<dbReference type="HOGENOM" id="CLU_076901_1_1_6"/>
<dbReference type="OrthoDB" id="9801395at2"/>
<dbReference type="Proteomes" id="UP000000426">
    <property type="component" value="Chromosome"/>
</dbReference>
<dbReference type="GO" id="GO:0005737">
    <property type="term" value="C:cytoplasm"/>
    <property type="evidence" value="ECO:0007669"/>
    <property type="project" value="UniProtKB-SubCell"/>
</dbReference>
<dbReference type="GO" id="GO:0051500">
    <property type="term" value="F:D-tyrosyl-tRNA(Tyr) deacylase activity"/>
    <property type="evidence" value="ECO:0007669"/>
    <property type="project" value="TreeGrafter"/>
</dbReference>
<dbReference type="GO" id="GO:0106026">
    <property type="term" value="F:Gly-tRNA(Ala) deacylase activity"/>
    <property type="evidence" value="ECO:0007669"/>
    <property type="project" value="UniProtKB-UniRule"/>
</dbReference>
<dbReference type="GO" id="GO:0043908">
    <property type="term" value="F:Ser(Gly)-tRNA(Ala) hydrolase activity"/>
    <property type="evidence" value="ECO:0007669"/>
    <property type="project" value="UniProtKB-UniRule"/>
</dbReference>
<dbReference type="GO" id="GO:0000049">
    <property type="term" value="F:tRNA binding"/>
    <property type="evidence" value="ECO:0007669"/>
    <property type="project" value="UniProtKB-UniRule"/>
</dbReference>
<dbReference type="GO" id="GO:0019478">
    <property type="term" value="P:D-amino acid catabolic process"/>
    <property type="evidence" value="ECO:0007669"/>
    <property type="project" value="UniProtKB-UniRule"/>
</dbReference>
<dbReference type="FunFam" id="3.50.80.10:FF:000001">
    <property type="entry name" value="D-aminoacyl-tRNA deacylase"/>
    <property type="match status" value="1"/>
</dbReference>
<dbReference type="Gene3D" id="3.50.80.10">
    <property type="entry name" value="D-tyrosyl-tRNA(Tyr) deacylase"/>
    <property type="match status" value="1"/>
</dbReference>
<dbReference type="HAMAP" id="MF_00518">
    <property type="entry name" value="Deacylase_Dtd"/>
    <property type="match status" value="1"/>
</dbReference>
<dbReference type="InterPro" id="IPR003732">
    <property type="entry name" value="Daa-tRNA_deacyls_DTD"/>
</dbReference>
<dbReference type="InterPro" id="IPR023509">
    <property type="entry name" value="DTD-like_sf"/>
</dbReference>
<dbReference type="NCBIfam" id="TIGR00256">
    <property type="entry name" value="D-aminoacyl-tRNA deacylase"/>
    <property type="match status" value="1"/>
</dbReference>
<dbReference type="PANTHER" id="PTHR10472:SF5">
    <property type="entry name" value="D-AMINOACYL-TRNA DEACYLASE 1"/>
    <property type="match status" value="1"/>
</dbReference>
<dbReference type="PANTHER" id="PTHR10472">
    <property type="entry name" value="D-TYROSYL-TRNA TYR DEACYLASE"/>
    <property type="match status" value="1"/>
</dbReference>
<dbReference type="Pfam" id="PF02580">
    <property type="entry name" value="Tyr_Deacylase"/>
    <property type="match status" value="1"/>
</dbReference>
<dbReference type="SUPFAM" id="SSF69500">
    <property type="entry name" value="DTD-like"/>
    <property type="match status" value="1"/>
</dbReference>
<evidence type="ECO:0000255" key="1">
    <source>
        <dbReference type="HAMAP-Rule" id="MF_00518"/>
    </source>
</evidence>
<feature type="chain" id="PRO_0000259300" description="D-aminoacyl-tRNA deacylase">
    <location>
        <begin position="1"/>
        <end position="145"/>
    </location>
</feature>
<feature type="short sequence motif" description="Gly-cisPro motif, important for rejection of L-amino acids" evidence="1">
    <location>
        <begin position="137"/>
        <end position="138"/>
    </location>
</feature>
<keyword id="KW-0963">Cytoplasm</keyword>
<keyword id="KW-0378">Hydrolase</keyword>
<keyword id="KW-0694">RNA-binding</keyword>
<keyword id="KW-0820">tRNA-binding</keyword>
<reference key="1">
    <citation type="journal article" date="2005" name="Proc. Natl. Acad. Sci. U.S.A.">
        <title>Comparison of the complete genome sequences of Pseudomonas syringae pv. syringae B728a and pv. tomato DC3000.</title>
        <authorList>
            <person name="Feil H."/>
            <person name="Feil W.S."/>
            <person name="Chain P."/>
            <person name="Larimer F."/>
            <person name="Dibartolo G."/>
            <person name="Copeland A."/>
            <person name="Lykidis A."/>
            <person name="Trong S."/>
            <person name="Nolan M."/>
            <person name="Goltsman E."/>
            <person name="Thiel J."/>
            <person name="Malfatti S."/>
            <person name="Loper J.E."/>
            <person name="Lapidus A."/>
            <person name="Detter J.C."/>
            <person name="Land M."/>
            <person name="Richardson P.M."/>
            <person name="Kyrpides N.C."/>
            <person name="Ivanova N."/>
            <person name="Lindow S.E."/>
        </authorList>
    </citation>
    <scope>NUCLEOTIDE SEQUENCE [LARGE SCALE GENOMIC DNA]</scope>
    <source>
        <strain>B728a</strain>
    </source>
</reference>
<gene>
    <name evidence="1" type="primary">dtd</name>
    <name type="ordered locus">Psyr_0376</name>
</gene>
<name>DTD_PSEU2</name>
<comment type="function">
    <text evidence="1">An aminoacyl-tRNA editing enzyme that deacylates mischarged D-aminoacyl-tRNAs. Also deacylates mischarged glycyl-tRNA(Ala), protecting cells against glycine mischarging by AlaRS. Acts via tRNA-based rather than protein-based catalysis; rejects L-amino acids rather than detecting D-amino acids in the active site. By recycling D-aminoacyl-tRNA to D-amino acids and free tRNA molecules, this enzyme counteracts the toxicity associated with the formation of D-aminoacyl-tRNA entities in vivo and helps enforce protein L-homochirality.</text>
</comment>
<comment type="catalytic activity">
    <reaction evidence="1">
        <text>glycyl-tRNA(Ala) + H2O = tRNA(Ala) + glycine + H(+)</text>
        <dbReference type="Rhea" id="RHEA:53744"/>
        <dbReference type="Rhea" id="RHEA-COMP:9657"/>
        <dbReference type="Rhea" id="RHEA-COMP:13640"/>
        <dbReference type="ChEBI" id="CHEBI:15377"/>
        <dbReference type="ChEBI" id="CHEBI:15378"/>
        <dbReference type="ChEBI" id="CHEBI:57305"/>
        <dbReference type="ChEBI" id="CHEBI:78442"/>
        <dbReference type="ChEBI" id="CHEBI:78522"/>
        <dbReference type="EC" id="3.1.1.96"/>
    </reaction>
</comment>
<comment type="catalytic activity">
    <reaction evidence="1">
        <text>a D-aminoacyl-tRNA + H2O = a tRNA + a D-alpha-amino acid + H(+)</text>
        <dbReference type="Rhea" id="RHEA:13953"/>
        <dbReference type="Rhea" id="RHEA-COMP:10123"/>
        <dbReference type="Rhea" id="RHEA-COMP:10124"/>
        <dbReference type="ChEBI" id="CHEBI:15377"/>
        <dbReference type="ChEBI" id="CHEBI:15378"/>
        <dbReference type="ChEBI" id="CHEBI:59871"/>
        <dbReference type="ChEBI" id="CHEBI:78442"/>
        <dbReference type="ChEBI" id="CHEBI:79333"/>
        <dbReference type="EC" id="3.1.1.96"/>
    </reaction>
</comment>
<comment type="subunit">
    <text evidence="1">Homodimer.</text>
</comment>
<comment type="subcellular location">
    <subcellularLocation>
        <location evidence="1">Cytoplasm</location>
    </subcellularLocation>
</comment>
<comment type="domain">
    <text evidence="1">A Gly-cisPro motif from one monomer fits into the active site of the other monomer to allow specific chiral rejection of L-amino acids.</text>
</comment>
<comment type="similarity">
    <text evidence="1">Belongs to the DTD family.</text>
</comment>
<protein>
    <recommendedName>
        <fullName evidence="1">D-aminoacyl-tRNA deacylase</fullName>
        <shortName evidence="1">DTD</shortName>
        <ecNumber evidence="1">3.1.1.96</ecNumber>
    </recommendedName>
    <alternativeName>
        <fullName evidence="1">Gly-tRNA(Ala) deacylase</fullName>
    </alternativeName>
</protein>
<proteinExistence type="inferred from homology"/>
<sequence>MKGLLQRVRSARVEVGTEVVGAIEQGILVLVGIEPQDTRASADKLLHKLLNYRVFSDVEGKMNLSLREVGGGLLLVSQFTLAADTKSGLRAGFSKAAPPALGAELFDYLLSQARIAHPTVAAGQFGADMQVHLINDGPVTFLFDT</sequence>
<accession>Q4ZZH6</accession>